<reference key="1">
    <citation type="submission" date="2007-02" db="EMBL/GenBank/DDBJ databases">
        <title>Complete sequence of chromosome of Shewanella baltica OS155.</title>
        <authorList>
            <consortium name="US DOE Joint Genome Institute"/>
            <person name="Copeland A."/>
            <person name="Lucas S."/>
            <person name="Lapidus A."/>
            <person name="Barry K."/>
            <person name="Detter J.C."/>
            <person name="Glavina del Rio T."/>
            <person name="Hammon N."/>
            <person name="Israni S."/>
            <person name="Dalin E."/>
            <person name="Tice H."/>
            <person name="Pitluck S."/>
            <person name="Sims D.R."/>
            <person name="Brettin T."/>
            <person name="Bruce D."/>
            <person name="Han C."/>
            <person name="Tapia R."/>
            <person name="Brainard J."/>
            <person name="Schmutz J."/>
            <person name="Larimer F."/>
            <person name="Land M."/>
            <person name="Hauser L."/>
            <person name="Kyrpides N."/>
            <person name="Mikhailova N."/>
            <person name="Brettar I."/>
            <person name="Klappenbach J."/>
            <person name="Konstantinidis K."/>
            <person name="Rodrigues J."/>
            <person name="Tiedje J."/>
            <person name="Richardson P."/>
        </authorList>
    </citation>
    <scope>NUCLEOTIDE SEQUENCE [LARGE SCALE GENOMIC DNA]</scope>
    <source>
        <strain>OS155 / ATCC BAA-1091</strain>
    </source>
</reference>
<proteinExistence type="inferred from homology"/>
<name>ARGB_SHEB5</name>
<comment type="function">
    <text evidence="1">Catalyzes the ATP-dependent phosphorylation of N-acetyl-L-glutamate.</text>
</comment>
<comment type="catalytic activity">
    <reaction evidence="1">
        <text>N-acetyl-L-glutamate + ATP = N-acetyl-L-glutamyl 5-phosphate + ADP</text>
        <dbReference type="Rhea" id="RHEA:14629"/>
        <dbReference type="ChEBI" id="CHEBI:30616"/>
        <dbReference type="ChEBI" id="CHEBI:44337"/>
        <dbReference type="ChEBI" id="CHEBI:57936"/>
        <dbReference type="ChEBI" id="CHEBI:456216"/>
        <dbReference type="EC" id="2.7.2.8"/>
    </reaction>
</comment>
<comment type="pathway">
    <text evidence="1">Amino-acid biosynthesis; L-arginine biosynthesis; N(2)-acetyl-L-ornithine from L-glutamate: step 2/4.</text>
</comment>
<comment type="subcellular location">
    <subcellularLocation>
        <location evidence="1">Cytoplasm</location>
    </subcellularLocation>
</comment>
<comment type="similarity">
    <text evidence="1">Belongs to the acetylglutamate kinase family. ArgB subfamily.</text>
</comment>
<dbReference type="EC" id="2.7.2.8" evidence="1"/>
<dbReference type="EMBL" id="CP000563">
    <property type="protein sequence ID" value="ABN63588.1"/>
    <property type="molecule type" value="Genomic_DNA"/>
</dbReference>
<dbReference type="RefSeq" id="WP_011848138.1">
    <property type="nucleotide sequence ID" value="NC_009052.1"/>
</dbReference>
<dbReference type="SMR" id="A3DA25"/>
<dbReference type="STRING" id="325240.Sbal_4123"/>
<dbReference type="GeneID" id="11774198"/>
<dbReference type="KEGG" id="sbl:Sbal_4123"/>
<dbReference type="HOGENOM" id="CLU_053680_1_1_6"/>
<dbReference type="OrthoDB" id="5915023at2"/>
<dbReference type="UniPathway" id="UPA00068">
    <property type="reaction ID" value="UER00107"/>
</dbReference>
<dbReference type="Proteomes" id="UP000001557">
    <property type="component" value="Chromosome"/>
</dbReference>
<dbReference type="GO" id="GO:0005737">
    <property type="term" value="C:cytoplasm"/>
    <property type="evidence" value="ECO:0007669"/>
    <property type="project" value="UniProtKB-SubCell"/>
</dbReference>
<dbReference type="GO" id="GO:0003991">
    <property type="term" value="F:acetylglutamate kinase activity"/>
    <property type="evidence" value="ECO:0007669"/>
    <property type="project" value="UniProtKB-UniRule"/>
</dbReference>
<dbReference type="GO" id="GO:0005524">
    <property type="term" value="F:ATP binding"/>
    <property type="evidence" value="ECO:0007669"/>
    <property type="project" value="UniProtKB-UniRule"/>
</dbReference>
<dbReference type="GO" id="GO:0042450">
    <property type="term" value="P:arginine biosynthetic process via ornithine"/>
    <property type="evidence" value="ECO:0007669"/>
    <property type="project" value="UniProtKB-UniRule"/>
</dbReference>
<dbReference type="GO" id="GO:0006526">
    <property type="term" value="P:L-arginine biosynthetic process"/>
    <property type="evidence" value="ECO:0007669"/>
    <property type="project" value="UniProtKB-UniPathway"/>
</dbReference>
<dbReference type="FunFam" id="3.40.1160.10:FF:000008">
    <property type="entry name" value="Acetylglutamate kinase"/>
    <property type="match status" value="1"/>
</dbReference>
<dbReference type="Gene3D" id="3.40.1160.10">
    <property type="entry name" value="Acetylglutamate kinase-like"/>
    <property type="match status" value="1"/>
</dbReference>
<dbReference type="HAMAP" id="MF_00082">
    <property type="entry name" value="ArgB"/>
    <property type="match status" value="1"/>
</dbReference>
<dbReference type="InterPro" id="IPR036393">
    <property type="entry name" value="AceGlu_kinase-like_sf"/>
</dbReference>
<dbReference type="InterPro" id="IPR004662">
    <property type="entry name" value="AcgluKinase_fam"/>
</dbReference>
<dbReference type="InterPro" id="IPR037528">
    <property type="entry name" value="ArgB"/>
</dbReference>
<dbReference type="InterPro" id="IPR001048">
    <property type="entry name" value="Asp/Glu/Uridylate_kinase"/>
</dbReference>
<dbReference type="NCBIfam" id="TIGR00761">
    <property type="entry name" value="argB"/>
    <property type="match status" value="1"/>
</dbReference>
<dbReference type="PANTHER" id="PTHR23342">
    <property type="entry name" value="N-ACETYLGLUTAMATE SYNTHASE"/>
    <property type="match status" value="1"/>
</dbReference>
<dbReference type="PANTHER" id="PTHR23342:SF0">
    <property type="entry name" value="N-ACETYLGLUTAMATE SYNTHASE, MITOCHONDRIAL"/>
    <property type="match status" value="1"/>
</dbReference>
<dbReference type="Pfam" id="PF00696">
    <property type="entry name" value="AA_kinase"/>
    <property type="match status" value="1"/>
</dbReference>
<dbReference type="PIRSF" id="PIRSF000728">
    <property type="entry name" value="NAGK"/>
    <property type="match status" value="1"/>
</dbReference>
<dbReference type="SUPFAM" id="SSF53633">
    <property type="entry name" value="Carbamate kinase-like"/>
    <property type="match status" value="1"/>
</dbReference>
<keyword id="KW-0028">Amino-acid biosynthesis</keyword>
<keyword id="KW-0055">Arginine biosynthesis</keyword>
<keyword id="KW-0067">ATP-binding</keyword>
<keyword id="KW-0963">Cytoplasm</keyword>
<keyword id="KW-0418">Kinase</keyword>
<keyword id="KW-0547">Nucleotide-binding</keyword>
<keyword id="KW-1185">Reference proteome</keyword>
<keyword id="KW-0808">Transferase</keyword>
<feature type="chain" id="PRO_1000010541" description="Acetylglutamate kinase">
    <location>
        <begin position="1"/>
        <end position="260"/>
    </location>
</feature>
<feature type="binding site" evidence="1">
    <location>
        <begin position="46"/>
        <end position="47"/>
    </location>
    <ligand>
        <name>substrate</name>
    </ligand>
</feature>
<feature type="binding site" evidence="1">
    <location>
        <position position="68"/>
    </location>
    <ligand>
        <name>substrate</name>
    </ligand>
</feature>
<feature type="binding site" evidence="1">
    <location>
        <position position="160"/>
    </location>
    <ligand>
        <name>substrate</name>
    </ligand>
</feature>
<feature type="site" description="Transition state stabilizer" evidence="1">
    <location>
        <position position="11"/>
    </location>
</feature>
<feature type="site" description="Transition state stabilizer" evidence="1">
    <location>
        <position position="219"/>
    </location>
</feature>
<evidence type="ECO:0000255" key="1">
    <source>
        <dbReference type="HAMAP-Rule" id="MF_00082"/>
    </source>
</evidence>
<organism>
    <name type="scientific">Shewanella baltica (strain OS155 / ATCC BAA-1091)</name>
    <dbReference type="NCBI Taxonomy" id="325240"/>
    <lineage>
        <taxon>Bacteria</taxon>
        <taxon>Pseudomonadati</taxon>
        <taxon>Pseudomonadota</taxon>
        <taxon>Gammaproteobacteria</taxon>
        <taxon>Alteromonadales</taxon>
        <taxon>Shewanellaceae</taxon>
        <taxon>Shewanella</taxon>
    </lineage>
</organism>
<sequence length="260" mass="26844">MSTNNSVLVLKVGGALLQCEMGMARLMDTAAAMLANGQQVLMVHGGGCLVDEQLAANGMETVKLEGLRVTPPEQMPIIAGALAGTSNKILQGAATKAGIVSVGMSLADGNTVSAKIKDERLGLVGEVTPKDGAYLKFILAQGWMPICSSIAMMDDGQMLNVNADQAATALAKLVGGKLVLLSDVSGVLDGKGQLIHSLNGKQIADLVKQGVIEKGMKVKVEAALEVAQWMGQAVQVASWRDASQLIALAKGEAVGTQIQP</sequence>
<accession>A3DA25</accession>
<gene>
    <name evidence="1" type="primary">argB</name>
    <name type="ordered locus">Sbal_4123</name>
</gene>
<protein>
    <recommendedName>
        <fullName evidence="1">Acetylglutamate kinase</fullName>
        <ecNumber evidence="1">2.7.2.8</ecNumber>
    </recommendedName>
    <alternativeName>
        <fullName evidence="1">N-acetyl-L-glutamate 5-phosphotransferase</fullName>
    </alternativeName>
    <alternativeName>
        <fullName evidence="1">NAG kinase</fullName>
        <shortName evidence="1">NAGK</shortName>
    </alternativeName>
</protein>